<sequence length="410" mass="43428">MPLHVEILSTGDELLTGQVVDTNSTWLMDRLWDLGVMVRRKTLVGDDRADLDAALRETSGRSDLVVVSGGMGPTEDDLTSERVAAVLGVPLELHEPSLRALEERFRKFGRAMTPNNEKQARFPRGAEVIPNRFGSAPGFAVRIGRAEVVCFPGVPVEYRGLADEWLLPRVAARLGEVPASRLLKLFAVPESHADHAMRPVMDDPANEGVRFGFRAHWPEVHVKWTVPGPGADARAARIAAAVRGIFGDAVFGEAKEELPALVVARLAARGERVALAESCTGGLLAELVTGVPGASAVIDLGVVAYANAMKEAVLGVPAPLLAAHGAVSEPVARALAEGARRAGRATWGLGITGIAGPTGGTPEKPVGTVHVALAGPGGTTAVERLYRGDRERIRKTAAFEALNLLRLALR</sequence>
<organism>
    <name type="scientific">Anaeromyxobacter sp. (strain Fw109-5)</name>
    <dbReference type="NCBI Taxonomy" id="404589"/>
    <lineage>
        <taxon>Bacteria</taxon>
        <taxon>Pseudomonadati</taxon>
        <taxon>Myxococcota</taxon>
        <taxon>Myxococcia</taxon>
        <taxon>Myxococcales</taxon>
        <taxon>Cystobacterineae</taxon>
        <taxon>Anaeromyxobacteraceae</taxon>
        <taxon>Anaeromyxobacter</taxon>
    </lineage>
</organism>
<comment type="similarity">
    <text evidence="1">Belongs to the CinA family.</text>
</comment>
<accession>A7HGS8</accession>
<dbReference type="EMBL" id="CP000769">
    <property type="protein sequence ID" value="ABS27924.1"/>
    <property type="molecule type" value="Genomic_DNA"/>
</dbReference>
<dbReference type="RefSeq" id="WP_012098552.1">
    <property type="nucleotide sequence ID" value="NC_009675.1"/>
</dbReference>
<dbReference type="SMR" id="A7HGS8"/>
<dbReference type="STRING" id="404589.Anae109_3745"/>
<dbReference type="KEGG" id="afw:Anae109_3745"/>
<dbReference type="eggNOG" id="COG1058">
    <property type="taxonomic scope" value="Bacteria"/>
</dbReference>
<dbReference type="eggNOG" id="COG1546">
    <property type="taxonomic scope" value="Bacteria"/>
</dbReference>
<dbReference type="HOGENOM" id="CLU_030805_9_2_7"/>
<dbReference type="OrthoDB" id="9801454at2"/>
<dbReference type="Proteomes" id="UP000006382">
    <property type="component" value="Chromosome"/>
</dbReference>
<dbReference type="CDD" id="cd00885">
    <property type="entry name" value="cinA"/>
    <property type="match status" value="1"/>
</dbReference>
<dbReference type="Gene3D" id="3.30.70.2860">
    <property type="match status" value="1"/>
</dbReference>
<dbReference type="Gene3D" id="3.90.950.20">
    <property type="entry name" value="CinA-like"/>
    <property type="match status" value="1"/>
</dbReference>
<dbReference type="Gene3D" id="3.40.980.10">
    <property type="entry name" value="MoaB/Mog-like domain"/>
    <property type="match status" value="1"/>
</dbReference>
<dbReference type="HAMAP" id="MF_00226_B">
    <property type="entry name" value="CinA_B"/>
    <property type="match status" value="1"/>
</dbReference>
<dbReference type="InterPro" id="IPR050101">
    <property type="entry name" value="CinA"/>
</dbReference>
<dbReference type="InterPro" id="IPR036653">
    <property type="entry name" value="CinA-like_C"/>
</dbReference>
<dbReference type="InterPro" id="IPR008136">
    <property type="entry name" value="CinA_C"/>
</dbReference>
<dbReference type="InterPro" id="IPR008135">
    <property type="entry name" value="Competence-induced_CinA"/>
</dbReference>
<dbReference type="InterPro" id="IPR036425">
    <property type="entry name" value="MoaB/Mog-like_dom_sf"/>
</dbReference>
<dbReference type="InterPro" id="IPR001453">
    <property type="entry name" value="MoaB/Mog_dom"/>
</dbReference>
<dbReference type="NCBIfam" id="TIGR00200">
    <property type="entry name" value="cinA_nterm"/>
    <property type="match status" value="1"/>
</dbReference>
<dbReference type="NCBIfam" id="TIGR00177">
    <property type="entry name" value="molyb_syn"/>
    <property type="match status" value="1"/>
</dbReference>
<dbReference type="NCBIfam" id="TIGR00199">
    <property type="entry name" value="PncC_domain"/>
    <property type="match status" value="1"/>
</dbReference>
<dbReference type="NCBIfam" id="NF001813">
    <property type="entry name" value="PRK00549.1"/>
    <property type="match status" value="1"/>
</dbReference>
<dbReference type="PANTHER" id="PTHR13939">
    <property type="entry name" value="NICOTINAMIDE-NUCLEOTIDE AMIDOHYDROLASE PNCC"/>
    <property type="match status" value="1"/>
</dbReference>
<dbReference type="PANTHER" id="PTHR13939:SF0">
    <property type="entry name" value="NMN AMIDOHYDROLASE-LIKE PROTEIN YFAY"/>
    <property type="match status" value="1"/>
</dbReference>
<dbReference type="Pfam" id="PF02464">
    <property type="entry name" value="CinA"/>
    <property type="match status" value="1"/>
</dbReference>
<dbReference type="Pfam" id="PF00994">
    <property type="entry name" value="MoCF_biosynth"/>
    <property type="match status" value="1"/>
</dbReference>
<dbReference type="PIRSF" id="PIRSF006728">
    <property type="entry name" value="CinA"/>
    <property type="match status" value="1"/>
</dbReference>
<dbReference type="SMART" id="SM00852">
    <property type="entry name" value="MoCF_biosynth"/>
    <property type="match status" value="1"/>
</dbReference>
<dbReference type="SUPFAM" id="SSF142433">
    <property type="entry name" value="CinA-like"/>
    <property type="match status" value="1"/>
</dbReference>
<dbReference type="SUPFAM" id="SSF53218">
    <property type="entry name" value="Molybdenum cofactor biosynthesis proteins"/>
    <property type="match status" value="1"/>
</dbReference>
<proteinExistence type="inferred from homology"/>
<gene>
    <name type="ordered locus">Anae109_3745</name>
</gene>
<feature type="chain" id="PRO_0000336498" description="CinA-like protein">
    <location>
        <begin position="1"/>
        <end position="410"/>
    </location>
</feature>
<name>CINAL_ANADF</name>
<reference key="1">
    <citation type="journal article" date="2015" name="Genome Announc.">
        <title>Complete genome sequence of Anaeromyxobacter sp. Fw109-5, an anaerobic, metal-reducing bacterium isolated from a contaminated subsurface environment.</title>
        <authorList>
            <person name="Hwang C."/>
            <person name="Copeland A."/>
            <person name="Lucas S."/>
            <person name="Lapidus A."/>
            <person name="Barry K."/>
            <person name="Glavina Del Rio T."/>
            <person name="Dalin E."/>
            <person name="Tice H."/>
            <person name="Pitluck S."/>
            <person name="Sims D."/>
            <person name="Brettin T."/>
            <person name="Bruce D.C."/>
            <person name="Detter J.C."/>
            <person name="Han C.S."/>
            <person name="Schmutz J."/>
            <person name="Larimer F.W."/>
            <person name="Land M.L."/>
            <person name="Hauser L.J."/>
            <person name="Kyrpides N."/>
            <person name="Lykidis A."/>
            <person name="Richardson P."/>
            <person name="Belieav A."/>
            <person name="Sanford R.A."/>
            <person name="Loeffler F.E."/>
            <person name="Fields M.W."/>
        </authorList>
    </citation>
    <scope>NUCLEOTIDE SEQUENCE [LARGE SCALE GENOMIC DNA]</scope>
    <source>
        <strain>Fw109-5</strain>
    </source>
</reference>
<protein>
    <recommendedName>
        <fullName evidence="1">CinA-like protein</fullName>
    </recommendedName>
</protein>
<evidence type="ECO:0000255" key="1">
    <source>
        <dbReference type="HAMAP-Rule" id="MF_00226"/>
    </source>
</evidence>
<keyword id="KW-1185">Reference proteome</keyword>